<evidence type="ECO:0000255" key="1">
    <source>
        <dbReference type="HAMAP-Rule" id="MF_00315"/>
    </source>
</evidence>
<dbReference type="EC" id="2.2.1.7" evidence="1"/>
<dbReference type="EMBL" id="CP000959">
    <property type="protein sequence ID" value="ACA92800.1"/>
    <property type="molecule type" value="Genomic_DNA"/>
</dbReference>
<dbReference type="RefSeq" id="WP_012338492.1">
    <property type="nucleotide sequence ID" value="NC_010515.1"/>
</dbReference>
<dbReference type="SMR" id="B1K3S9"/>
<dbReference type="GeneID" id="83050425"/>
<dbReference type="KEGG" id="bcm:Bcenmc03_3648"/>
<dbReference type="HOGENOM" id="CLU_009227_1_4_4"/>
<dbReference type="UniPathway" id="UPA00064">
    <property type="reaction ID" value="UER00091"/>
</dbReference>
<dbReference type="Proteomes" id="UP000002169">
    <property type="component" value="Chromosome 2"/>
</dbReference>
<dbReference type="GO" id="GO:0005829">
    <property type="term" value="C:cytosol"/>
    <property type="evidence" value="ECO:0007669"/>
    <property type="project" value="TreeGrafter"/>
</dbReference>
<dbReference type="GO" id="GO:0008661">
    <property type="term" value="F:1-deoxy-D-xylulose-5-phosphate synthase activity"/>
    <property type="evidence" value="ECO:0007669"/>
    <property type="project" value="UniProtKB-UniRule"/>
</dbReference>
<dbReference type="GO" id="GO:0000287">
    <property type="term" value="F:magnesium ion binding"/>
    <property type="evidence" value="ECO:0007669"/>
    <property type="project" value="UniProtKB-UniRule"/>
</dbReference>
<dbReference type="GO" id="GO:0030976">
    <property type="term" value="F:thiamine pyrophosphate binding"/>
    <property type="evidence" value="ECO:0007669"/>
    <property type="project" value="UniProtKB-UniRule"/>
</dbReference>
<dbReference type="GO" id="GO:0052865">
    <property type="term" value="P:1-deoxy-D-xylulose 5-phosphate biosynthetic process"/>
    <property type="evidence" value="ECO:0007669"/>
    <property type="project" value="UniProtKB-UniPathway"/>
</dbReference>
<dbReference type="GO" id="GO:0019288">
    <property type="term" value="P:isopentenyl diphosphate biosynthetic process, methylerythritol 4-phosphate pathway"/>
    <property type="evidence" value="ECO:0007669"/>
    <property type="project" value="TreeGrafter"/>
</dbReference>
<dbReference type="GO" id="GO:0016114">
    <property type="term" value="P:terpenoid biosynthetic process"/>
    <property type="evidence" value="ECO:0007669"/>
    <property type="project" value="UniProtKB-UniRule"/>
</dbReference>
<dbReference type="GO" id="GO:0009228">
    <property type="term" value="P:thiamine biosynthetic process"/>
    <property type="evidence" value="ECO:0007669"/>
    <property type="project" value="UniProtKB-UniRule"/>
</dbReference>
<dbReference type="CDD" id="cd02007">
    <property type="entry name" value="TPP_DXS"/>
    <property type="match status" value="1"/>
</dbReference>
<dbReference type="CDD" id="cd07033">
    <property type="entry name" value="TPP_PYR_DXS_TK_like"/>
    <property type="match status" value="1"/>
</dbReference>
<dbReference type="FunFam" id="3.40.50.920:FF:000002">
    <property type="entry name" value="1-deoxy-D-xylulose-5-phosphate synthase"/>
    <property type="match status" value="1"/>
</dbReference>
<dbReference type="FunFam" id="3.40.50.970:FF:000005">
    <property type="entry name" value="1-deoxy-D-xylulose-5-phosphate synthase"/>
    <property type="match status" value="1"/>
</dbReference>
<dbReference type="Gene3D" id="3.40.50.920">
    <property type="match status" value="1"/>
</dbReference>
<dbReference type="Gene3D" id="3.40.50.970">
    <property type="match status" value="2"/>
</dbReference>
<dbReference type="HAMAP" id="MF_00315">
    <property type="entry name" value="DXP_synth"/>
    <property type="match status" value="1"/>
</dbReference>
<dbReference type="InterPro" id="IPR005477">
    <property type="entry name" value="Dxylulose-5-P_synthase"/>
</dbReference>
<dbReference type="InterPro" id="IPR029061">
    <property type="entry name" value="THDP-binding"/>
</dbReference>
<dbReference type="InterPro" id="IPR009014">
    <property type="entry name" value="Transketo_C/PFOR_II"/>
</dbReference>
<dbReference type="InterPro" id="IPR005475">
    <property type="entry name" value="Transketolase-like_Pyr-bd"/>
</dbReference>
<dbReference type="InterPro" id="IPR020826">
    <property type="entry name" value="Transketolase_BS"/>
</dbReference>
<dbReference type="InterPro" id="IPR033248">
    <property type="entry name" value="Transketolase_C"/>
</dbReference>
<dbReference type="InterPro" id="IPR049557">
    <property type="entry name" value="Transketolase_CS"/>
</dbReference>
<dbReference type="NCBIfam" id="TIGR00204">
    <property type="entry name" value="dxs"/>
    <property type="match status" value="1"/>
</dbReference>
<dbReference type="NCBIfam" id="NF003933">
    <property type="entry name" value="PRK05444.2-2"/>
    <property type="match status" value="1"/>
</dbReference>
<dbReference type="PANTHER" id="PTHR43322">
    <property type="entry name" value="1-D-DEOXYXYLULOSE 5-PHOSPHATE SYNTHASE-RELATED"/>
    <property type="match status" value="1"/>
</dbReference>
<dbReference type="PANTHER" id="PTHR43322:SF5">
    <property type="entry name" value="1-DEOXY-D-XYLULOSE-5-PHOSPHATE SYNTHASE, CHLOROPLASTIC"/>
    <property type="match status" value="1"/>
</dbReference>
<dbReference type="Pfam" id="PF13292">
    <property type="entry name" value="DXP_synthase_N"/>
    <property type="match status" value="1"/>
</dbReference>
<dbReference type="Pfam" id="PF02779">
    <property type="entry name" value="Transket_pyr"/>
    <property type="match status" value="1"/>
</dbReference>
<dbReference type="Pfam" id="PF02780">
    <property type="entry name" value="Transketolase_C"/>
    <property type="match status" value="1"/>
</dbReference>
<dbReference type="SMART" id="SM00861">
    <property type="entry name" value="Transket_pyr"/>
    <property type="match status" value="1"/>
</dbReference>
<dbReference type="SUPFAM" id="SSF52518">
    <property type="entry name" value="Thiamin diphosphate-binding fold (THDP-binding)"/>
    <property type="match status" value="2"/>
</dbReference>
<dbReference type="SUPFAM" id="SSF52922">
    <property type="entry name" value="TK C-terminal domain-like"/>
    <property type="match status" value="1"/>
</dbReference>
<dbReference type="PROSITE" id="PS00801">
    <property type="entry name" value="TRANSKETOLASE_1"/>
    <property type="match status" value="1"/>
</dbReference>
<dbReference type="PROSITE" id="PS00802">
    <property type="entry name" value="TRANSKETOLASE_2"/>
    <property type="match status" value="1"/>
</dbReference>
<feature type="chain" id="PRO_1000115726" description="1-deoxy-D-xylulose-5-phosphate synthase">
    <location>
        <begin position="1"/>
        <end position="634"/>
    </location>
</feature>
<feature type="binding site" evidence="1">
    <location>
        <position position="74"/>
    </location>
    <ligand>
        <name>thiamine diphosphate</name>
        <dbReference type="ChEBI" id="CHEBI:58937"/>
    </ligand>
</feature>
<feature type="binding site" evidence="1">
    <location>
        <begin position="115"/>
        <end position="117"/>
    </location>
    <ligand>
        <name>thiamine diphosphate</name>
        <dbReference type="ChEBI" id="CHEBI:58937"/>
    </ligand>
</feature>
<feature type="binding site" evidence="1">
    <location>
        <position position="146"/>
    </location>
    <ligand>
        <name>Mg(2+)</name>
        <dbReference type="ChEBI" id="CHEBI:18420"/>
    </ligand>
</feature>
<feature type="binding site" evidence="1">
    <location>
        <begin position="147"/>
        <end position="148"/>
    </location>
    <ligand>
        <name>thiamine diphosphate</name>
        <dbReference type="ChEBI" id="CHEBI:58937"/>
    </ligand>
</feature>
<feature type="binding site" evidence="1">
    <location>
        <position position="176"/>
    </location>
    <ligand>
        <name>Mg(2+)</name>
        <dbReference type="ChEBI" id="CHEBI:18420"/>
    </ligand>
</feature>
<feature type="binding site" evidence="1">
    <location>
        <position position="176"/>
    </location>
    <ligand>
        <name>thiamine diphosphate</name>
        <dbReference type="ChEBI" id="CHEBI:58937"/>
    </ligand>
</feature>
<feature type="binding site" evidence="1">
    <location>
        <position position="283"/>
    </location>
    <ligand>
        <name>thiamine diphosphate</name>
        <dbReference type="ChEBI" id="CHEBI:58937"/>
    </ligand>
</feature>
<feature type="binding site" evidence="1">
    <location>
        <position position="365"/>
    </location>
    <ligand>
        <name>thiamine diphosphate</name>
        <dbReference type="ChEBI" id="CHEBI:58937"/>
    </ligand>
</feature>
<name>DXS_BURO0</name>
<protein>
    <recommendedName>
        <fullName evidence="1">1-deoxy-D-xylulose-5-phosphate synthase</fullName>
        <ecNumber evidence="1">2.2.1.7</ecNumber>
    </recommendedName>
    <alternativeName>
        <fullName evidence="1">1-deoxyxylulose-5-phosphate synthase</fullName>
        <shortName evidence="1">DXP synthase</shortName>
        <shortName evidence="1">DXPS</shortName>
    </alternativeName>
</protein>
<gene>
    <name evidence="1" type="primary">dxs</name>
    <name type="ordered locus">Bcenmc03_3648</name>
</gene>
<reference key="1">
    <citation type="submission" date="2008-02" db="EMBL/GenBank/DDBJ databases">
        <title>Complete sequence of chromosome 2 of Burkholderia cenocepacia MC0-3.</title>
        <authorList>
            <person name="Copeland A."/>
            <person name="Lucas S."/>
            <person name="Lapidus A."/>
            <person name="Barry K."/>
            <person name="Bruce D."/>
            <person name="Goodwin L."/>
            <person name="Glavina del Rio T."/>
            <person name="Dalin E."/>
            <person name="Tice H."/>
            <person name="Pitluck S."/>
            <person name="Chain P."/>
            <person name="Malfatti S."/>
            <person name="Shin M."/>
            <person name="Vergez L."/>
            <person name="Schmutz J."/>
            <person name="Larimer F."/>
            <person name="Land M."/>
            <person name="Hauser L."/>
            <person name="Kyrpides N."/>
            <person name="Mikhailova N."/>
            <person name="Tiedje J."/>
            <person name="Richardson P."/>
        </authorList>
    </citation>
    <scope>NUCLEOTIDE SEQUENCE [LARGE SCALE GENOMIC DNA]</scope>
    <source>
        <strain>MC0-3</strain>
    </source>
</reference>
<comment type="function">
    <text evidence="1">Catalyzes the acyloin condensation reaction between C atoms 2 and 3 of pyruvate and glyceraldehyde 3-phosphate to yield 1-deoxy-D-xylulose-5-phosphate (DXP).</text>
</comment>
<comment type="catalytic activity">
    <reaction evidence="1">
        <text>D-glyceraldehyde 3-phosphate + pyruvate + H(+) = 1-deoxy-D-xylulose 5-phosphate + CO2</text>
        <dbReference type="Rhea" id="RHEA:12605"/>
        <dbReference type="ChEBI" id="CHEBI:15361"/>
        <dbReference type="ChEBI" id="CHEBI:15378"/>
        <dbReference type="ChEBI" id="CHEBI:16526"/>
        <dbReference type="ChEBI" id="CHEBI:57792"/>
        <dbReference type="ChEBI" id="CHEBI:59776"/>
        <dbReference type="EC" id="2.2.1.7"/>
    </reaction>
</comment>
<comment type="cofactor">
    <cofactor evidence="1">
        <name>Mg(2+)</name>
        <dbReference type="ChEBI" id="CHEBI:18420"/>
    </cofactor>
    <text evidence="1">Binds 1 Mg(2+) ion per subunit.</text>
</comment>
<comment type="cofactor">
    <cofactor evidence="1">
        <name>thiamine diphosphate</name>
        <dbReference type="ChEBI" id="CHEBI:58937"/>
    </cofactor>
    <text evidence="1">Binds 1 thiamine pyrophosphate per subunit.</text>
</comment>
<comment type="pathway">
    <text evidence="1">Metabolic intermediate biosynthesis; 1-deoxy-D-xylulose 5-phosphate biosynthesis; 1-deoxy-D-xylulose 5-phosphate from D-glyceraldehyde 3-phosphate and pyruvate: step 1/1.</text>
</comment>
<comment type="subunit">
    <text evidence="1">Homodimer.</text>
</comment>
<comment type="similarity">
    <text evidence="1">Belongs to the transketolase family. DXPS subfamily.</text>
</comment>
<sequence length="634" mass="68648">MYDLLKTIDDPADLRRLDRRQLQPLADELRAFVLDSVSKTGGHLSSNLGTVELTIALHYVFNTPNDRIVWDVGHQTYPHKILTGRRDQMHSLRQYDGISGFPRRSESEYDTFGTAHSSTSISAALGMAIGSQLNGDDRFSIAVIGDGAMTAGMAFEAMNNAGVSEDAKLLVILNDNDMSISPPVGALNRHLARLMSGRFYAAARAGVERVLSVAPPVLELARKLEEHAKGMVVPATLFEEFGFNYIGPIDGHDLDSLIPTLQNIRELRGPQFLHVVTKKGQGYKLAEADPVLYHGPGKFNPAEGIKPSTTPAKKTYTQVFGEWLCDEAERDTRVVGITPAMREGSGMVEFEKRFKDRYYDVGIAEQHAVTFAGGLATEGLKPVVAIYSTFLQRAYDQLIHDVALQNLPVVFAIDRAGLVGADGATHAGAYDLAFMRCIPNMTIMAASDENECRQMLHTALQQPNPTAVRYPRGAGTGVATVKEFTEIPLGKGEVRRRTSQPEGKRVAILAFGTMVAPSLAAAEELDATVANMRFVKPVDAALVRELAETHDYLVTVEEGCVMGGAGSACVEALMESGVIRPVLQLGLPDQFVDHGDHAKLLAQCGLDGAGIAKSIRERFLSPAADVAGHAKRVA</sequence>
<accession>B1K3S9</accession>
<keyword id="KW-0414">Isoprene biosynthesis</keyword>
<keyword id="KW-0460">Magnesium</keyword>
<keyword id="KW-0479">Metal-binding</keyword>
<keyword id="KW-0784">Thiamine biosynthesis</keyword>
<keyword id="KW-0786">Thiamine pyrophosphate</keyword>
<keyword id="KW-0808">Transferase</keyword>
<proteinExistence type="inferred from homology"/>
<organism>
    <name type="scientific">Burkholderia orbicola (strain MC0-3)</name>
    <dbReference type="NCBI Taxonomy" id="406425"/>
    <lineage>
        <taxon>Bacteria</taxon>
        <taxon>Pseudomonadati</taxon>
        <taxon>Pseudomonadota</taxon>
        <taxon>Betaproteobacteria</taxon>
        <taxon>Burkholderiales</taxon>
        <taxon>Burkholderiaceae</taxon>
        <taxon>Burkholderia</taxon>
        <taxon>Burkholderia cepacia complex</taxon>
        <taxon>Burkholderia orbicola</taxon>
    </lineage>
</organism>